<reference evidence="9" key="1">
    <citation type="submission" date="2017-07" db="EMBL/GenBank/DDBJ databases">
        <authorList>
            <person name="Sun Z.S."/>
            <person name="Albrecht U."/>
            <person name="Echele G."/>
            <person name="Lee C.C."/>
        </authorList>
    </citation>
    <scope>NUCLEOTIDE SEQUENCE [MRNA]</scope>
</reference>
<reference evidence="10" key="2">
    <citation type="submission" date="2009-11" db="EMBL/GenBank/DDBJ databases">
        <authorList>
            <consortium name="Porcine genome sequencing project"/>
        </authorList>
    </citation>
    <scope>NUCLEOTIDE SEQUENCE [LARGE SCALE GENOMIC DNA]</scope>
    <source>
        <strain evidence="10">Duroc</strain>
    </source>
</reference>
<reference key="3">
    <citation type="journal article" date="1979" name="Biochem. Biophys. Res. Commun.">
        <title>Characterization of a gastrin releasing peptide from porcine non-antral gastric tissue.</title>
        <authorList>
            <person name="McDonald T.J."/>
            <person name="Joernvall H."/>
            <person name="Nilsson G."/>
            <person name="Vagne M."/>
            <person name="Ghatei M."/>
            <person name="Bloom S.R."/>
            <person name="Mutt V."/>
        </authorList>
    </citation>
    <scope>PROTEIN SEQUENCE OF 24-50</scope>
    <scope>FUNCTION</scope>
</reference>
<reference key="4">
    <citation type="journal article" date="1984" name="Biochem. Biophys. Res. Commun.">
        <title>Neuromedin C: a bombesin-like peptide identified in porcine spinal cord.</title>
        <authorList>
            <person name="Minamino N."/>
            <person name="Kangawa K."/>
            <person name="Matsuo H."/>
        </authorList>
    </citation>
    <scope>PROTEIN SEQUENCE OF 41-50</scope>
    <scope>AMIDATION AT MET-50</scope>
</reference>
<protein>
    <recommendedName>
        <fullName>Gastrin-releasing peptide</fullName>
        <shortName>GRP</shortName>
    </recommendedName>
    <component>
        <recommendedName>
            <fullName>Neuromedin-C</fullName>
        </recommendedName>
        <alternativeName>
            <fullName>GRP-10</fullName>
        </alternativeName>
        <alternativeName>
            <fullName evidence="4">GRP18-27</fullName>
        </alternativeName>
    </component>
</protein>
<name>GRP_PIG</name>
<sequence>MRGREFPLVLLALVLCQAPRGPAAPVSVGGGTVLAKMYPRGNHWAVGHLMGKKSTGESPYAYEGGNMKEQLREYIRWEDATRNLLSLLEAKGIGSHQPPQWEPLGIRQSTWDSKDGSNFKDMGPRLKVDGLSAPGSQHEGRIPQLN</sequence>
<keyword id="KW-0027">Amidation</keyword>
<keyword id="KW-0966">Cell projection</keyword>
<keyword id="KW-0165">Cleavage on pair of basic residues</keyword>
<keyword id="KW-0968">Cytoplasmic vesicle</keyword>
<keyword id="KW-0903">Direct protein sequencing</keyword>
<keyword id="KW-0467">Mast cell degranulation</keyword>
<keyword id="KW-1185">Reference proteome</keyword>
<keyword id="KW-0964">Secreted</keyword>
<keyword id="KW-0732">Signal</keyword>
<evidence type="ECO:0000250" key="1">
    <source>
        <dbReference type="UniProtKB" id="P07492"/>
    </source>
</evidence>
<evidence type="ECO:0000250" key="2">
    <source>
        <dbReference type="UniProtKB" id="P24393"/>
    </source>
</evidence>
<evidence type="ECO:0000250" key="3">
    <source>
        <dbReference type="UniProtKB" id="Q863C3"/>
    </source>
</evidence>
<evidence type="ECO:0000250" key="4">
    <source>
        <dbReference type="UniProtKB" id="Q8R1I2"/>
    </source>
</evidence>
<evidence type="ECO:0000256" key="5">
    <source>
        <dbReference type="SAM" id="MobiDB-lite"/>
    </source>
</evidence>
<evidence type="ECO:0000269" key="6">
    <source>
    </source>
</evidence>
<evidence type="ECO:0000269" key="7">
    <source>
    </source>
</evidence>
<evidence type="ECO:0000305" key="8"/>
<evidence type="ECO:0000312" key="9">
    <source>
        <dbReference type="EMBL" id="AWR92766.1"/>
    </source>
</evidence>
<evidence type="ECO:0000312" key="10">
    <source>
        <dbReference type="Proteomes" id="UP000008227"/>
    </source>
</evidence>
<gene>
    <name type="primary">GRP</name>
</gene>
<accession>P63153</accession>
<accession>A0A287ANW4</accession>
<accession>P01294</accession>
<comment type="function">
    <text evidence="2 4 6">Stimulates the release of gastrin and other gastrointestinal hormones (PubMed:496973). Contributes to the perception of prurient stimuli and to the transmission of itch signals in the spinal cord that promote scratching behavior (By similarity). Contributes primarily to nonhistaminergic itch sensation (By similarity). In one study, shown to act in the amygdala as part of an inhibitory network which inhibits memory specifically related to learned fear (By similarity). In another study, shown to act on vasoactive intestinal peptide (VIP)-expressing cells in the auditory cortex, most likely via extrasynaptic diffusion from local and long-range sources, to mediate disinhibition of glutamatergic cells via VIP cell-specific GRPR signaling which leads to enhanced auditory fear memories (By similarity). Contributes to the regulation of food intake (By similarity). Inhibits voltage-gated sodium channels but enhances voltage-gated potassium channels in hippocampal neurons (By similarity). Induces sighing by acting directly on the pre-Botzinger complex, a cluster of several thousand neurons in the ventrolateral medulla responsible for inspiration during respiratory activity (By similarity).</text>
</comment>
<comment type="function">
    <molecule>Neuromedin-C</molecule>
    <text evidence="4">Induces an itch response through activation of receptors present on mast cells, triggering mast cell degranulation.</text>
</comment>
<comment type="subcellular location">
    <subcellularLocation>
        <location evidence="1">Secreted</location>
    </subcellularLocation>
    <subcellularLocation>
        <location evidence="3">Cytoplasmic vesicle</location>
        <location evidence="3">Secretory vesicle lumen</location>
    </subcellularLocation>
    <subcellularLocation>
        <location evidence="4">Cell projection</location>
        <location evidence="4">Neuron projection</location>
    </subcellularLocation>
    <text evidence="4">In neurons of the retrotrapezoid nucleus/parafacial respiratory group, expressed on neuron projections which project into the pre-Botzinger complex.</text>
</comment>
<comment type="similarity">
    <text evidence="8">Belongs to the bombesin/neuromedin-B/ranatensin family.</text>
</comment>
<feature type="signal peptide" evidence="6">
    <location>
        <begin position="1"/>
        <end position="23"/>
    </location>
</feature>
<feature type="peptide" id="PRO_0000045915" description="Gastrin-releasing peptide" evidence="6">
    <location>
        <begin position="24"/>
        <end position="50"/>
    </location>
</feature>
<feature type="peptide" id="PRO_0000003038" description="Neuromedin-C" evidence="7">
    <location>
        <begin position="41"/>
        <end position="50"/>
    </location>
</feature>
<feature type="propeptide" id="PRO_0000455540" evidence="6">
    <location>
        <begin position="54"/>
        <end position="146"/>
    </location>
</feature>
<feature type="region of interest" description="Disordered" evidence="5">
    <location>
        <begin position="95"/>
        <end position="146"/>
    </location>
</feature>
<feature type="compositionally biased region" description="Basic and acidic residues" evidence="5">
    <location>
        <begin position="112"/>
        <end position="128"/>
    </location>
</feature>
<feature type="modified residue" description="Methionine amide" evidence="7">
    <location>
        <position position="50"/>
    </location>
</feature>
<proteinExistence type="evidence at protein level"/>
<organism>
    <name type="scientific">Sus scrofa</name>
    <name type="common">Pig</name>
    <dbReference type="NCBI Taxonomy" id="9823"/>
    <lineage>
        <taxon>Eukaryota</taxon>
        <taxon>Metazoa</taxon>
        <taxon>Chordata</taxon>
        <taxon>Craniata</taxon>
        <taxon>Vertebrata</taxon>
        <taxon>Euteleostomi</taxon>
        <taxon>Mammalia</taxon>
        <taxon>Eutheria</taxon>
        <taxon>Laurasiatheria</taxon>
        <taxon>Artiodactyla</taxon>
        <taxon>Suina</taxon>
        <taxon>Suidae</taxon>
        <taxon>Sus</taxon>
    </lineage>
</organism>
<dbReference type="EMBL" id="MF508701">
    <property type="protein sequence ID" value="AWR92766.1"/>
    <property type="molecule type" value="mRNA"/>
</dbReference>
<dbReference type="EMBL" id="AEMK02000004">
    <property type="status" value="NOT_ANNOTATED_CDS"/>
    <property type="molecule type" value="Genomic_DNA"/>
</dbReference>
<dbReference type="PIR" id="A01562">
    <property type="entry name" value="RHPGA"/>
</dbReference>
<dbReference type="RefSeq" id="XP_020930961.1">
    <property type="nucleotide sequence ID" value="XM_021075302.1"/>
</dbReference>
<dbReference type="STRING" id="9823.ENSSSCP00000045701"/>
<dbReference type="PaxDb" id="9823-ENSSSCP00000005286"/>
<dbReference type="Ensembl" id="ENSSSCT00000040819.3">
    <property type="protein sequence ID" value="ENSSSCP00000045701.1"/>
    <property type="gene ID" value="ENSSSCG00000037300.3"/>
</dbReference>
<dbReference type="Ensembl" id="ENSSSCT00025015656.1">
    <property type="protein sequence ID" value="ENSSSCP00025006193.1"/>
    <property type="gene ID" value="ENSSSCG00025011850.1"/>
</dbReference>
<dbReference type="Ensembl" id="ENSSSCT00045005498.1">
    <property type="protein sequence ID" value="ENSSSCP00045003676.1"/>
    <property type="gene ID" value="ENSSSCG00045003373.1"/>
</dbReference>
<dbReference type="Ensembl" id="ENSSSCT00055047955.1">
    <property type="protein sequence ID" value="ENSSSCP00055038276.1"/>
    <property type="gene ID" value="ENSSSCG00055024334.1"/>
</dbReference>
<dbReference type="Ensembl" id="ENSSSCT00065035695.1">
    <property type="protein sequence ID" value="ENSSSCP00065014946.1"/>
    <property type="gene ID" value="ENSSSCG00065026545.1"/>
</dbReference>
<dbReference type="Ensembl" id="ENSSSCT00070020904.1">
    <property type="protein sequence ID" value="ENSSSCP00070017285.1"/>
    <property type="gene ID" value="ENSSSCG00070010777.1"/>
</dbReference>
<dbReference type="Ensembl" id="ENSSSCT00090047305">
    <property type="protein sequence ID" value="ENSSSCP00090029382"/>
    <property type="gene ID" value="ENSSSCG00090026744"/>
</dbReference>
<dbReference type="Ensembl" id="ENSSSCT00105037195">
    <property type="protein sequence ID" value="ENSSSCP00105025815"/>
    <property type="gene ID" value="ENSSSCG00105019422"/>
</dbReference>
<dbReference type="Ensembl" id="ENSSSCT00115008427">
    <property type="protein sequence ID" value="ENSSSCP00115007914"/>
    <property type="gene ID" value="ENSSSCG00115004887"/>
</dbReference>
<dbReference type="Ensembl" id="ENSSSCT00130070709">
    <property type="protein sequence ID" value="ENSSSCP00130051057"/>
    <property type="gene ID" value="ENSSSCG00130036080"/>
</dbReference>
<dbReference type="GeneID" id="102166444"/>
<dbReference type="VGNC" id="VGNC:88707">
    <property type="gene designation" value="GRP"/>
</dbReference>
<dbReference type="GeneTree" id="ENSGT00940000154470"/>
<dbReference type="InParanoid" id="P63153"/>
<dbReference type="OMA" id="KDMMDYL"/>
<dbReference type="OrthoDB" id="9879745at2759"/>
<dbReference type="Reactome" id="R-SSC-375276">
    <property type="pathway name" value="Peptide ligand-binding receptors"/>
</dbReference>
<dbReference type="Reactome" id="R-SSC-381771">
    <property type="pathway name" value="Synthesis, secretion, and inactivation of Glucagon-like Peptide-1 (GLP-1)"/>
</dbReference>
<dbReference type="Reactome" id="R-SSC-416476">
    <property type="pathway name" value="G alpha (q) signalling events"/>
</dbReference>
<dbReference type="Proteomes" id="UP000008227">
    <property type="component" value="Chromosome 1"/>
</dbReference>
<dbReference type="Proteomes" id="UP000314985">
    <property type="component" value="Chromosome 1"/>
</dbReference>
<dbReference type="Proteomes" id="UP000694570">
    <property type="component" value="Unplaced"/>
</dbReference>
<dbReference type="Proteomes" id="UP000694571">
    <property type="component" value="Unplaced"/>
</dbReference>
<dbReference type="Proteomes" id="UP000694720">
    <property type="component" value="Unplaced"/>
</dbReference>
<dbReference type="Proteomes" id="UP000694722">
    <property type="component" value="Unplaced"/>
</dbReference>
<dbReference type="Proteomes" id="UP000694723">
    <property type="component" value="Unplaced"/>
</dbReference>
<dbReference type="Proteomes" id="UP000694724">
    <property type="component" value="Unplaced"/>
</dbReference>
<dbReference type="Proteomes" id="UP000694725">
    <property type="component" value="Unplaced"/>
</dbReference>
<dbReference type="Proteomes" id="UP000694726">
    <property type="component" value="Unplaced"/>
</dbReference>
<dbReference type="Proteomes" id="UP000694727">
    <property type="component" value="Unplaced"/>
</dbReference>
<dbReference type="Proteomes" id="UP000694728">
    <property type="component" value="Unplaced"/>
</dbReference>
<dbReference type="Bgee" id="ENSSSCG00000037300">
    <property type="expression patterns" value="Expressed in Ammon's horn and 11 other cell types or tissues"/>
</dbReference>
<dbReference type="GO" id="GO:0005615">
    <property type="term" value="C:extracellular space"/>
    <property type="evidence" value="ECO:0000250"/>
    <property type="project" value="UniProtKB"/>
</dbReference>
<dbReference type="GO" id="GO:0043005">
    <property type="term" value="C:neuron projection"/>
    <property type="evidence" value="ECO:0000250"/>
    <property type="project" value="UniProtKB"/>
</dbReference>
<dbReference type="GO" id="GO:0034774">
    <property type="term" value="C:secretory granule lumen"/>
    <property type="evidence" value="ECO:0000250"/>
    <property type="project" value="UniProtKB"/>
</dbReference>
<dbReference type="GO" id="GO:0005184">
    <property type="term" value="F:neuropeptide hormone activity"/>
    <property type="evidence" value="ECO:0000318"/>
    <property type="project" value="GO_Central"/>
</dbReference>
<dbReference type="GO" id="GO:0043303">
    <property type="term" value="P:mast cell degranulation"/>
    <property type="evidence" value="ECO:0000250"/>
    <property type="project" value="UniProtKB"/>
</dbReference>
<dbReference type="GO" id="GO:1903817">
    <property type="term" value="P:negative regulation of voltage-gated potassium channel activity"/>
    <property type="evidence" value="ECO:0000250"/>
    <property type="project" value="UniProtKB"/>
</dbReference>
<dbReference type="GO" id="GO:1905151">
    <property type="term" value="P:negative regulation of voltage-gated sodium channel activity"/>
    <property type="evidence" value="ECO:0000250"/>
    <property type="project" value="UniProtKB"/>
</dbReference>
<dbReference type="GO" id="GO:0007218">
    <property type="term" value="P:neuropeptide signaling pathway"/>
    <property type="evidence" value="ECO:0000318"/>
    <property type="project" value="GO_Central"/>
</dbReference>
<dbReference type="GO" id="GO:2000987">
    <property type="term" value="P:positive regulation of behavioral fear response"/>
    <property type="evidence" value="ECO:0000250"/>
    <property type="project" value="UniProtKB"/>
</dbReference>
<dbReference type="GO" id="GO:0090277">
    <property type="term" value="P:positive regulation of peptide hormone secretion"/>
    <property type="evidence" value="ECO:0000315"/>
    <property type="project" value="UniProtKB"/>
</dbReference>
<dbReference type="GO" id="GO:1900738">
    <property type="term" value="P:positive regulation of phospholipase C-activating G protein-coupled receptor signaling pathway"/>
    <property type="evidence" value="ECO:0000250"/>
    <property type="project" value="UniProtKB"/>
</dbReference>
<dbReference type="GO" id="GO:1903942">
    <property type="term" value="P:positive regulation of respiratory gaseous exchange"/>
    <property type="evidence" value="ECO:0000250"/>
    <property type="project" value="UniProtKB"/>
</dbReference>
<dbReference type="GO" id="GO:0036343">
    <property type="term" value="P:psychomotor behavior"/>
    <property type="evidence" value="ECO:0007669"/>
    <property type="project" value="Ensembl"/>
</dbReference>
<dbReference type="GO" id="GO:0043207">
    <property type="term" value="P:response to external biotic stimulus"/>
    <property type="evidence" value="ECO:0007669"/>
    <property type="project" value="Ensembl"/>
</dbReference>
<dbReference type="GO" id="GO:0035176">
    <property type="term" value="P:social behavior"/>
    <property type="evidence" value="ECO:0007669"/>
    <property type="project" value="Ensembl"/>
</dbReference>
<dbReference type="InterPro" id="IPR000874">
    <property type="entry name" value="Bombesin"/>
</dbReference>
<dbReference type="PANTHER" id="PTHR16866">
    <property type="entry name" value="GASTRIN-RELEASING PEPTIDE"/>
    <property type="match status" value="1"/>
</dbReference>
<dbReference type="PANTHER" id="PTHR16866:SF2">
    <property type="entry name" value="GASTRIN-RELEASING PEPTIDE"/>
    <property type="match status" value="1"/>
</dbReference>
<dbReference type="Pfam" id="PF02044">
    <property type="entry name" value="Bombesin"/>
    <property type="match status" value="1"/>
</dbReference>
<dbReference type="PROSITE" id="PS00257">
    <property type="entry name" value="BOMBESIN"/>
    <property type="match status" value="1"/>
</dbReference>